<feature type="signal peptide" evidence="3">
    <location>
        <begin position="1"/>
        <end position="18"/>
    </location>
</feature>
<feature type="chain" id="PRO_0000320220" description="Chondroitin proteoglycan 2">
    <location>
        <begin position="19"/>
        <end position="491"/>
    </location>
</feature>
<feature type="domain" description="Chitin-binding type-2 1" evidence="4">
    <location>
        <begin position="21"/>
        <end position="78"/>
    </location>
</feature>
<feature type="domain" description="Chitin-binding type-2 2" evidence="4">
    <location>
        <begin position="125"/>
        <end position="182"/>
    </location>
</feature>
<feature type="domain" description="Chitin-binding type-2 3" evidence="4">
    <location>
        <begin position="217"/>
        <end position="274"/>
    </location>
</feature>
<feature type="domain" description="Chitin-binding type-2 4" evidence="4">
    <location>
        <begin position="279"/>
        <end position="334"/>
    </location>
</feature>
<feature type="domain" description="Chitin-binding type-2 5" evidence="4">
    <location>
        <begin position="367"/>
        <end position="423"/>
    </location>
</feature>
<feature type="domain" description="Chitin-binding type-2 6" evidence="4">
    <location>
        <begin position="436"/>
        <end position="491"/>
    </location>
</feature>
<feature type="region of interest" description="Disordered" evidence="5">
    <location>
        <begin position="80"/>
        <end position="126"/>
    </location>
</feature>
<feature type="region of interest" description="Disordered" evidence="5">
    <location>
        <begin position="187"/>
        <end position="217"/>
    </location>
</feature>
<feature type="region of interest" description="Disordered" evidence="5">
    <location>
        <begin position="336"/>
        <end position="367"/>
    </location>
</feature>
<feature type="compositionally biased region" description="Gly residues" evidence="5">
    <location>
        <begin position="87"/>
        <end position="120"/>
    </location>
</feature>
<feature type="compositionally biased region" description="Low complexity" evidence="5">
    <location>
        <begin position="200"/>
        <end position="210"/>
    </location>
</feature>
<feature type="compositionally biased region" description="Low complexity" evidence="5">
    <location>
        <begin position="356"/>
        <end position="367"/>
    </location>
</feature>
<feature type="glycosylation site" description="O-linked (Xyl...) (chondroitin sulfate) serine" evidence="1">
    <location>
        <position position="197"/>
    </location>
</feature>
<feature type="glycosylation site" description="O-linked (Xyl...) (chondroitin sulfate) serine" evidence="1">
    <location>
        <position position="201"/>
    </location>
</feature>
<feature type="glycosylation site" description="N-linked (GlcNAc...) asparagine" evidence="3">
    <location>
        <position position="464"/>
    </location>
</feature>
<feature type="disulfide bond" evidence="4">
    <location>
        <begin position="54"/>
        <end position="67"/>
    </location>
</feature>
<feature type="disulfide bond" evidence="4">
    <location>
        <begin position="158"/>
        <end position="171"/>
    </location>
</feature>
<feature type="disulfide bond" evidence="4">
    <location>
        <begin position="250"/>
        <end position="263"/>
    </location>
</feature>
<feature type="disulfide bond" evidence="4">
    <location>
        <begin position="310"/>
        <end position="323"/>
    </location>
</feature>
<feature type="disulfide bond" evidence="4">
    <location>
        <begin position="399"/>
        <end position="412"/>
    </location>
</feature>
<feature type="disulfide bond" evidence="4">
    <location>
        <begin position="467"/>
        <end position="481"/>
    </location>
</feature>
<dbReference type="EMBL" id="HE601481">
    <property type="protein sequence ID" value="CAP37144.2"/>
    <property type="molecule type" value="Genomic_DNA"/>
</dbReference>
<dbReference type="SMR" id="A8XWX5"/>
<dbReference type="STRING" id="6238.A8XWX5"/>
<dbReference type="GlyCosmos" id="A8XWX5">
    <property type="glycosylation" value="3 sites, No reported glycans"/>
</dbReference>
<dbReference type="EnsemblMetazoa" id="CBG20011.1">
    <property type="protein sequence ID" value="CBG20011.1"/>
    <property type="gene ID" value="WBGene00039115"/>
</dbReference>
<dbReference type="WormBase" id="CBG20011">
    <property type="protein sequence ID" value="CBP27389"/>
    <property type="gene ID" value="WBGene00039115"/>
    <property type="gene designation" value="Cbr-cpg-2.2"/>
</dbReference>
<dbReference type="eggNOG" id="ENOG502RXZX">
    <property type="taxonomic scope" value="Eukaryota"/>
</dbReference>
<dbReference type="HOGENOM" id="CLU_041716_0_0_1"/>
<dbReference type="InParanoid" id="A8XWX5"/>
<dbReference type="OMA" id="VEQYCPN"/>
<dbReference type="OrthoDB" id="5914859at2759"/>
<dbReference type="Proteomes" id="UP000008549">
    <property type="component" value="Unassembled WGS sequence"/>
</dbReference>
<dbReference type="GO" id="GO:0005576">
    <property type="term" value="C:extracellular region"/>
    <property type="evidence" value="ECO:0007669"/>
    <property type="project" value="InterPro"/>
</dbReference>
<dbReference type="GO" id="GO:0008061">
    <property type="term" value="F:chitin binding"/>
    <property type="evidence" value="ECO:0000250"/>
    <property type="project" value="UniProtKB"/>
</dbReference>
<dbReference type="GO" id="GO:0009792">
    <property type="term" value="P:embryo development ending in birth or egg hatching"/>
    <property type="evidence" value="ECO:0000250"/>
    <property type="project" value="UniProtKB"/>
</dbReference>
<dbReference type="GO" id="GO:0000281">
    <property type="term" value="P:mitotic cytokinesis"/>
    <property type="evidence" value="ECO:0000250"/>
    <property type="project" value="UniProtKB"/>
</dbReference>
<dbReference type="FunFam" id="2.170.140.10:FF:000009">
    <property type="entry name" value="Chondroitin proteoglycan 1"/>
    <property type="match status" value="3"/>
</dbReference>
<dbReference type="FunFam" id="3.20.20.80:FF:000286">
    <property type="entry name" value="Chondroitin proteoglycan 2"/>
    <property type="match status" value="1"/>
</dbReference>
<dbReference type="Gene3D" id="2.170.140.10">
    <property type="entry name" value="Chitin binding domain"/>
    <property type="match status" value="3"/>
</dbReference>
<dbReference type="Gene3D" id="3.20.20.80">
    <property type="entry name" value="Glycosidases"/>
    <property type="match status" value="2"/>
</dbReference>
<dbReference type="InterPro" id="IPR002557">
    <property type="entry name" value="Chitin-bd_dom"/>
</dbReference>
<dbReference type="InterPro" id="IPR036508">
    <property type="entry name" value="Chitin-bd_dom_sf"/>
</dbReference>
<dbReference type="InterPro" id="IPR051940">
    <property type="entry name" value="Chitin_bind-dev_reg"/>
</dbReference>
<dbReference type="PANTHER" id="PTHR23301">
    <property type="entry name" value="CHITIN BINDING PERITROPHIN-A"/>
    <property type="match status" value="1"/>
</dbReference>
<dbReference type="PANTHER" id="PTHR23301:SF77">
    <property type="entry name" value="CHONDROITIN PROTEOGLYCAN-2"/>
    <property type="match status" value="1"/>
</dbReference>
<dbReference type="Pfam" id="PF01607">
    <property type="entry name" value="CBM_14"/>
    <property type="match status" value="6"/>
</dbReference>
<dbReference type="SMART" id="SM00494">
    <property type="entry name" value="ChtBD2"/>
    <property type="match status" value="6"/>
</dbReference>
<dbReference type="SUPFAM" id="SSF57625">
    <property type="entry name" value="Invertebrate chitin-binding proteins"/>
    <property type="match status" value="6"/>
</dbReference>
<dbReference type="PROSITE" id="PS50940">
    <property type="entry name" value="CHIT_BIND_II"/>
    <property type="match status" value="6"/>
</dbReference>
<keyword id="KW-0131">Cell cycle</keyword>
<keyword id="KW-0132">Cell division</keyword>
<keyword id="KW-0147">Chitin-binding</keyword>
<keyword id="KW-0217">Developmental protein</keyword>
<keyword id="KW-1015">Disulfide bond</keyword>
<keyword id="KW-0325">Glycoprotein</keyword>
<keyword id="KW-0654">Proteoglycan</keyword>
<keyword id="KW-1185">Reference proteome</keyword>
<keyword id="KW-0677">Repeat</keyword>
<keyword id="KW-0732">Signal</keyword>
<proteinExistence type="inferred from homology"/>
<organism>
    <name type="scientific">Caenorhabditis briggsae</name>
    <dbReference type="NCBI Taxonomy" id="6238"/>
    <lineage>
        <taxon>Eukaryota</taxon>
        <taxon>Metazoa</taxon>
        <taxon>Ecdysozoa</taxon>
        <taxon>Nematoda</taxon>
        <taxon>Chromadorea</taxon>
        <taxon>Rhabditida</taxon>
        <taxon>Rhabditina</taxon>
        <taxon>Rhabditomorpha</taxon>
        <taxon>Rhabditoidea</taxon>
        <taxon>Rhabditidae</taxon>
        <taxon>Peloderinae</taxon>
        <taxon>Caenorhabditis</taxon>
    </lineage>
</organism>
<accession>A8XWX5</accession>
<evidence type="ECO:0000250" key="1"/>
<evidence type="ECO:0000250" key="2">
    <source>
        <dbReference type="UniProtKB" id="P41996"/>
    </source>
</evidence>
<evidence type="ECO:0000255" key="3"/>
<evidence type="ECO:0000255" key="4">
    <source>
        <dbReference type="PROSITE-ProRule" id="PRU00144"/>
    </source>
</evidence>
<evidence type="ECO:0000256" key="5">
    <source>
        <dbReference type="SAM" id="MobiDB-lite"/>
    </source>
</evidence>
<evidence type="ECO:0000312" key="6">
    <source>
        <dbReference type="WormBase" id="CBG20011"/>
    </source>
</evidence>
<name>CPG2_CAEBR</name>
<reference key="1">
    <citation type="journal article" date="2003" name="PLoS Biol.">
        <title>The genome sequence of Caenorhabditis briggsae: a platform for comparative genomics.</title>
        <authorList>
            <person name="Stein L.D."/>
            <person name="Bao Z."/>
            <person name="Blasiar D."/>
            <person name="Blumenthal T."/>
            <person name="Brent M.R."/>
            <person name="Chen N."/>
            <person name="Chinwalla A."/>
            <person name="Clarke L."/>
            <person name="Clee C."/>
            <person name="Coghlan A."/>
            <person name="Coulson A."/>
            <person name="D'Eustachio P."/>
            <person name="Fitch D.H.A."/>
            <person name="Fulton L.A."/>
            <person name="Fulton R.E."/>
            <person name="Griffiths-Jones S."/>
            <person name="Harris T.W."/>
            <person name="Hillier L.W."/>
            <person name="Kamath R."/>
            <person name="Kuwabara P.E."/>
            <person name="Mardis E.R."/>
            <person name="Marra M.A."/>
            <person name="Miner T.L."/>
            <person name="Minx P."/>
            <person name="Mullikin J.C."/>
            <person name="Plumb R.W."/>
            <person name="Rogers J."/>
            <person name="Schein J.E."/>
            <person name="Sohrmann M."/>
            <person name="Spieth J."/>
            <person name="Stajich J.E."/>
            <person name="Wei C."/>
            <person name="Willey D."/>
            <person name="Wilson R.K."/>
            <person name="Durbin R.M."/>
            <person name="Waterston R.H."/>
        </authorList>
    </citation>
    <scope>NUCLEOTIDE SEQUENCE [LARGE SCALE GENOMIC DNA]</scope>
    <source>
        <strain>AF16</strain>
    </source>
</reference>
<sequence>MKTIVALGLLALATAASGQFLQDCTNALDGLYAIGNCESQFLTCSGGIARIMDCPADLIYNEPLLICDWRHNVVGCEGSGEASGEQSGEGSGEASGEGSGEASGEGSGEASGEGSGSGEGSGEENNVCEGLEDGAYSSGGCTTYYFFCTDNTARFLSCPTPLFYDVATQKCAWKALVEECNGEIIIDGSGETSGEGSGEASGENSGENSGEGSGEFEPTCDGKADGIYPNGVCVPNFLTCSGGIARVMNCPASLIFNPDILVCDWPRDVAECHGLSTPAPVCEDDGYFSFGQCSSSFTACTNGRAIVMFCPAGLKFSQANQRCDYDDLVNECQEASGEESSGEASGEQSGEGSGEASGEASGEASGENECVSLDNGLHAIGCSPRVLSCQNGHVDIFECPSSLVFNEQTLICDYPQTSLKCLIEDTLLIDETPITPFDCSTNGLFSDGLCSATYHQCSAGQLINFTCAETNAVFSAANAECVDSSTLLQCH</sequence>
<gene>
    <name evidence="6" type="primary">cpg-2.2</name>
    <name evidence="6" type="ORF">CBG20011</name>
</gene>
<comment type="function">
    <text evidence="2">Required for polar body extrusion during cytokinesis in embryo development. Affects cortical granule size. Shown to have roles in meiotic chromosome segregation, osmotic barrier function and polarization in conjunction with cpg-2. Binds chitin (By similarity).</text>
</comment>
<protein>
    <recommendedName>
        <fullName>Chondroitin proteoglycan 2</fullName>
    </recommendedName>
</protein>